<evidence type="ECO:0000255" key="1">
    <source>
        <dbReference type="HAMAP-Rule" id="MF_01454"/>
    </source>
</evidence>
<evidence type="ECO:0000255" key="2">
    <source>
        <dbReference type="PROSITE-ProRule" id="PRU01231"/>
    </source>
</evidence>
<evidence type="ECO:0000256" key="3">
    <source>
        <dbReference type="SAM" id="MobiDB-lite"/>
    </source>
</evidence>
<organism>
    <name type="scientific">Acinetobacter baumannii (strain ATCC 17978 / DSM 105126 / CIP 53.77 / LMG 1025 / NCDC KC755 / 5377)</name>
    <dbReference type="NCBI Taxonomy" id="400667"/>
    <lineage>
        <taxon>Bacteria</taxon>
        <taxon>Pseudomonadati</taxon>
        <taxon>Pseudomonadota</taxon>
        <taxon>Gammaproteobacteria</taxon>
        <taxon>Moraxellales</taxon>
        <taxon>Moraxellaceae</taxon>
        <taxon>Acinetobacter</taxon>
        <taxon>Acinetobacter calcoaceticus/baumannii complex</taxon>
    </lineage>
</organism>
<protein>
    <recommendedName>
        <fullName evidence="1">GTPase Obg</fullName>
        <ecNumber evidence="1">3.6.5.-</ecNumber>
    </recommendedName>
    <alternativeName>
        <fullName evidence="1">GTP-binding protein Obg</fullName>
    </alternativeName>
</protein>
<reference key="1">
    <citation type="journal article" date="2007" name="Genes Dev.">
        <title>New insights into Acinetobacter baumannii pathogenesis revealed by high-density pyrosequencing and transposon mutagenesis.</title>
        <authorList>
            <person name="Smith M.G."/>
            <person name="Gianoulis T.A."/>
            <person name="Pukatzki S."/>
            <person name="Mekalanos J.J."/>
            <person name="Ornston L.N."/>
            <person name="Gerstein M."/>
            <person name="Snyder M."/>
        </authorList>
    </citation>
    <scope>NUCLEOTIDE SEQUENCE [LARGE SCALE GENOMIC DNA]</scope>
    <source>
        <strain>ATCC 17978 / DSM 105126 / CIP 53.77 / LMG 1025 / NCDC KC755 / 5377</strain>
    </source>
</reference>
<accession>A3M7M2</accession>
<comment type="function">
    <text evidence="1">An essential GTPase which binds GTP, GDP and possibly (p)ppGpp with moderate affinity, with high nucleotide exchange rates and a fairly low GTP hydrolysis rate. Plays a role in control of the cell cycle, stress response, ribosome biogenesis and in those bacteria that undergo differentiation, in morphogenesis control.</text>
</comment>
<comment type="cofactor">
    <cofactor evidence="1">
        <name>Mg(2+)</name>
        <dbReference type="ChEBI" id="CHEBI:18420"/>
    </cofactor>
</comment>
<comment type="subunit">
    <text evidence="1">Monomer.</text>
</comment>
<comment type="subcellular location">
    <subcellularLocation>
        <location evidence="1">Cytoplasm</location>
    </subcellularLocation>
</comment>
<comment type="similarity">
    <text evidence="1">Belongs to the TRAFAC class OBG-HflX-like GTPase superfamily. OBG GTPase family.</text>
</comment>
<keyword id="KW-0963">Cytoplasm</keyword>
<keyword id="KW-0342">GTP-binding</keyword>
<keyword id="KW-0378">Hydrolase</keyword>
<keyword id="KW-0460">Magnesium</keyword>
<keyword id="KW-0479">Metal-binding</keyword>
<keyword id="KW-0547">Nucleotide-binding</keyword>
<gene>
    <name evidence="1" type="primary">obg</name>
    <name type="ordered locus">A1S_2498</name>
</gene>
<proteinExistence type="inferred from homology"/>
<name>OBG_ACIBT</name>
<sequence>MRFVDEAVITVEAGDGGNGVASFRREKFVPFGGPDGGDGGRGGSIYIQADDDTSTLVDYRYTRKFRAERGKNGAGANCTGRGGEDVVLKVPVGTTIVDTDSGDIIGDLVEDGQRVMVASGGEGGLGNTHFKSSTNRAPRKCTTGTKGEFREIRLELKVLADVGLLGMPNAGKSTFIRAVSAAKPKVADYPFTTMVPNLGVVDADRHRSFVMADIPGLIEGAAEGAGLGIRFLKHLARTRILLHIIDVQPIDGSDPAHNAKAIMNELAKFSPTLAKLPIVLVLNKLDQIAEESREEWCQHILDELQWTGPVFKTSGLLEEGTKEVVYYLMDQIEQQREREVEDPEYAAEVRAFREQLEAETREQTIAAKEAYRAMRKAQRLESMMDDDDDFDDDEDDGDVESIYVRD</sequence>
<dbReference type="EC" id="3.6.5.-" evidence="1"/>
<dbReference type="EMBL" id="CP000521">
    <property type="protein sequence ID" value="ABO12916.2"/>
    <property type="molecule type" value="Genomic_DNA"/>
</dbReference>
<dbReference type="SMR" id="A3M7M2"/>
<dbReference type="KEGG" id="acb:A1S_2498"/>
<dbReference type="HOGENOM" id="CLU_011747_2_0_6"/>
<dbReference type="GO" id="GO:0005737">
    <property type="term" value="C:cytoplasm"/>
    <property type="evidence" value="ECO:0007669"/>
    <property type="project" value="UniProtKB-SubCell"/>
</dbReference>
<dbReference type="GO" id="GO:0005525">
    <property type="term" value="F:GTP binding"/>
    <property type="evidence" value="ECO:0007669"/>
    <property type="project" value="UniProtKB-UniRule"/>
</dbReference>
<dbReference type="GO" id="GO:0003924">
    <property type="term" value="F:GTPase activity"/>
    <property type="evidence" value="ECO:0007669"/>
    <property type="project" value="UniProtKB-UniRule"/>
</dbReference>
<dbReference type="GO" id="GO:0000287">
    <property type="term" value="F:magnesium ion binding"/>
    <property type="evidence" value="ECO:0007669"/>
    <property type="project" value="InterPro"/>
</dbReference>
<dbReference type="GO" id="GO:0042254">
    <property type="term" value="P:ribosome biogenesis"/>
    <property type="evidence" value="ECO:0007669"/>
    <property type="project" value="UniProtKB-UniRule"/>
</dbReference>
<dbReference type="CDD" id="cd01898">
    <property type="entry name" value="Obg"/>
    <property type="match status" value="1"/>
</dbReference>
<dbReference type="FunFam" id="2.70.210.12:FF:000001">
    <property type="entry name" value="GTPase Obg"/>
    <property type="match status" value="1"/>
</dbReference>
<dbReference type="Gene3D" id="2.70.210.12">
    <property type="entry name" value="GTP1/OBG domain"/>
    <property type="match status" value="1"/>
</dbReference>
<dbReference type="Gene3D" id="3.40.50.300">
    <property type="entry name" value="P-loop containing nucleotide triphosphate hydrolases"/>
    <property type="match status" value="1"/>
</dbReference>
<dbReference type="HAMAP" id="MF_01454">
    <property type="entry name" value="GTPase_Obg"/>
    <property type="match status" value="1"/>
</dbReference>
<dbReference type="InterPro" id="IPR031167">
    <property type="entry name" value="G_OBG"/>
</dbReference>
<dbReference type="InterPro" id="IPR006073">
    <property type="entry name" value="GTP-bd"/>
</dbReference>
<dbReference type="InterPro" id="IPR014100">
    <property type="entry name" value="GTP-bd_Obg/CgtA"/>
</dbReference>
<dbReference type="InterPro" id="IPR006074">
    <property type="entry name" value="GTP1-OBG_CS"/>
</dbReference>
<dbReference type="InterPro" id="IPR006169">
    <property type="entry name" value="GTP1_OBG_dom"/>
</dbReference>
<dbReference type="InterPro" id="IPR036726">
    <property type="entry name" value="GTP1_OBG_dom_sf"/>
</dbReference>
<dbReference type="InterPro" id="IPR045086">
    <property type="entry name" value="OBG_GTPase"/>
</dbReference>
<dbReference type="InterPro" id="IPR027417">
    <property type="entry name" value="P-loop_NTPase"/>
</dbReference>
<dbReference type="NCBIfam" id="TIGR02729">
    <property type="entry name" value="Obg_CgtA"/>
    <property type="match status" value="1"/>
</dbReference>
<dbReference type="NCBIfam" id="NF008955">
    <property type="entry name" value="PRK12297.1"/>
    <property type="match status" value="1"/>
</dbReference>
<dbReference type="NCBIfam" id="NF008956">
    <property type="entry name" value="PRK12299.1"/>
    <property type="match status" value="1"/>
</dbReference>
<dbReference type="PANTHER" id="PTHR11702">
    <property type="entry name" value="DEVELOPMENTALLY REGULATED GTP-BINDING PROTEIN-RELATED"/>
    <property type="match status" value="1"/>
</dbReference>
<dbReference type="PANTHER" id="PTHR11702:SF31">
    <property type="entry name" value="MITOCHONDRIAL RIBOSOME-ASSOCIATED GTPASE 2"/>
    <property type="match status" value="1"/>
</dbReference>
<dbReference type="Pfam" id="PF01018">
    <property type="entry name" value="GTP1_OBG"/>
    <property type="match status" value="1"/>
</dbReference>
<dbReference type="Pfam" id="PF01926">
    <property type="entry name" value="MMR_HSR1"/>
    <property type="match status" value="1"/>
</dbReference>
<dbReference type="PIRSF" id="PIRSF002401">
    <property type="entry name" value="GTP_bd_Obg/CgtA"/>
    <property type="match status" value="1"/>
</dbReference>
<dbReference type="PRINTS" id="PR00326">
    <property type="entry name" value="GTP1OBG"/>
</dbReference>
<dbReference type="SUPFAM" id="SSF82051">
    <property type="entry name" value="Obg GTP-binding protein N-terminal domain"/>
    <property type="match status" value="1"/>
</dbReference>
<dbReference type="SUPFAM" id="SSF52540">
    <property type="entry name" value="P-loop containing nucleoside triphosphate hydrolases"/>
    <property type="match status" value="1"/>
</dbReference>
<dbReference type="PROSITE" id="PS51710">
    <property type="entry name" value="G_OBG"/>
    <property type="match status" value="1"/>
</dbReference>
<dbReference type="PROSITE" id="PS00905">
    <property type="entry name" value="GTP1_OBG"/>
    <property type="match status" value="1"/>
</dbReference>
<dbReference type="PROSITE" id="PS51883">
    <property type="entry name" value="OBG"/>
    <property type="match status" value="1"/>
</dbReference>
<feature type="chain" id="PRO_0000385668" description="GTPase Obg">
    <location>
        <begin position="1"/>
        <end position="406"/>
    </location>
</feature>
<feature type="domain" description="Obg" evidence="2">
    <location>
        <begin position="1"/>
        <end position="159"/>
    </location>
</feature>
<feature type="domain" description="OBG-type G" evidence="1">
    <location>
        <begin position="160"/>
        <end position="333"/>
    </location>
</feature>
<feature type="region of interest" description="Disordered" evidence="3">
    <location>
        <begin position="120"/>
        <end position="143"/>
    </location>
</feature>
<feature type="region of interest" description="Disordered" evidence="3">
    <location>
        <begin position="381"/>
        <end position="406"/>
    </location>
</feature>
<feature type="compositionally biased region" description="Acidic residues" evidence="3">
    <location>
        <begin position="383"/>
        <end position="399"/>
    </location>
</feature>
<feature type="binding site" evidence="1">
    <location>
        <begin position="166"/>
        <end position="173"/>
    </location>
    <ligand>
        <name>GTP</name>
        <dbReference type="ChEBI" id="CHEBI:37565"/>
    </ligand>
</feature>
<feature type="binding site" evidence="1">
    <location>
        <position position="173"/>
    </location>
    <ligand>
        <name>Mg(2+)</name>
        <dbReference type="ChEBI" id="CHEBI:18420"/>
    </ligand>
</feature>
<feature type="binding site" evidence="1">
    <location>
        <begin position="191"/>
        <end position="195"/>
    </location>
    <ligand>
        <name>GTP</name>
        <dbReference type="ChEBI" id="CHEBI:37565"/>
    </ligand>
</feature>
<feature type="binding site" evidence="1">
    <location>
        <position position="193"/>
    </location>
    <ligand>
        <name>Mg(2+)</name>
        <dbReference type="ChEBI" id="CHEBI:18420"/>
    </ligand>
</feature>
<feature type="binding site" evidence="1">
    <location>
        <begin position="213"/>
        <end position="216"/>
    </location>
    <ligand>
        <name>GTP</name>
        <dbReference type="ChEBI" id="CHEBI:37565"/>
    </ligand>
</feature>
<feature type="binding site" evidence="1">
    <location>
        <begin position="283"/>
        <end position="286"/>
    </location>
    <ligand>
        <name>GTP</name>
        <dbReference type="ChEBI" id="CHEBI:37565"/>
    </ligand>
</feature>
<feature type="binding site" evidence="1">
    <location>
        <begin position="314"/>
        <end position="316"/>
    </location>
    <ligand>
        <name>GTP</name>
        <dbReference type="ChEBI" id="CHEBI:37565"/>
    </ligand>
</feature>